<sequence length="308" mass="33219">MSPMAERLRSIIRDPGRIRRAEPLKRHTSVRIGGPADYLVEVADRHELSRLLRLAGEEALPVYILGSGSNLVVSDEGVRGLVLRLTGEFARIAVDGSTVRVGGGCSLPKLAHQASRRGLGGLEFACAIPGTVGAGLVMNAGAHGGDMAQVVAEATVIWGDGRMERLCPGEIGFAYRSTRLQGTSAIVAEVVMALRPADRAALEGAMRQHLNRRRATQPLQYPNAGSVFKNPPGDYAGRLIEQAGLKGERVGDAQVSEKHANFIVNLGQATARDVLTLMDRVRSTVERRFGVRLEAEVKIWGHNPWFPP</sequence>
<feature type="chain" id="PRO_0000224729" description="UDP-N-acetylenolpyruvoylglucosamine reductase 2">
    <location>
        <begin position="1"/>
        <end position="308"/>
    </location>
</feature>
<feature type="domain" description="FAD-binding PCMH-type" evidence="1">
    <location>
        <begin position="31"/>
        <end position="197"/>
    </location>
</feature>
<feature type="active site" evidence="1">
    <location>
        <position position="176"/>
    </location>
</feature>
<feature type="active site" description="Proton donor" evidence="1">
    <location>
        <position position="226"/>
    </location>
</feature>
<feature type="active site" evidence="1">
    <location>
        <position position="296"/>
    </location>
</feature>
<evidence type="ECO:0000255" key="1">
    <source>
        <dbReference type="HAMAP-Rule" id="MF_00037"/>
    </source>
</evidence>
<dbReference type="EC" id="1.3.1.98" evidence="1"/>
<dbReference type="EMBL" id="AP006840">
    <property type="protein sequence ID" value="BAD40196.1"/>
    <property type="molecule type" value="Genomic_DNA"/>
</dbReference>
<dbReference type="SMR" id="Q67Q47"/>
<dbReference type="STRING" id="292459.STH1211"/>
<dbReference type="KEGG" id="sth:STH1211"/>
<dbReference type="eggNOG" id="COG0812">
    <property type="taxonomic scope" value="Bacteria"/>
</dbReference>
<dbReference type="HOGENOM" id="CLU_035304_1_1_9"/>
<dbReference type="UniPathway" id="UPA00219"/>
<dbReference type="Proteomes" id="UP000000417">
    <property type="component" value="Chromosome"/>
</dbReference>
<dbReference type="GO" id="GO:0005829">
    <property type="term" value="C:cytosol"/>
    <property type="evidence" value="ECO:0007669"/>
    <property type="project" value="TreeGrafter"/>
</dbReference>
<dbReference type="GO" id="GO:0071949">
    <property type="term" value="F:FAD binding"/>
    <property type="evidence" value="ECO:0007669"/>
    <property type="project" value="InterPro"/>
</dbReference>
<dbReference type="GO" id="GO:0008762">
    <property type="term" value="F:UDP-N-acetylmuramate dehydrogenase activity"/>
    <property type="evidence" value="ECO:0007669"/>
    <property type="project" value="UniProtKB-UniRule"/>
</dbReference>
<dbReference type="GO" id="GO:0051301">
    <property type="term" value="P:cell division"/>
    <property type="evidence" value="ECO:0007669"/>
    <property type="project" value="UniProtKB-KW"/>
</dbReference>
<dbReference type="GO" id="GO:0071555">
    <property type="term" value="P:cell wall organization"/>
    <property type="evidence" value="ECO:0007669"/>
    <property type="project" value="UniProtKB-KW"/>
</dbReference>
<dbReference type="GO" id="GO:0009252">
    <property type="term" value="P:peptidoglycan biosynthetic process"/>
    <property type="evidence" value="ECO:0007669"/>
    <property type="project" value="UniProtKB-UniRule"/>
</dbReference>
<dbReference type="GO" id="GO:0008360">
    <property type="term" value="P:regulation of cell shape"/>
    <property type="evidence" value="ECO:0007669"/>
    <property type="project" value="UniProtKB-KW"/>
</dbReference>
<dbReference type="Gene3D" id="3.30.465.10">
    <property type="match status" value="1"/>
</dbReference>
<dbReference type="Gene3D" id="3.90.78.10">
    <property type="entry name" value="UDP-N-acetylenolpyruvoylglucosamine reductase, C-terminal domain"/>
    <property type="match status" value="1"/>
</dbReference>
<dbReference type="Gene3D" id="3.30.43.10">
    <property type="entry name" value="Uridine Diphospho-n-acetylenolpyruvylglucosamine Reductase, domain 2"/>
    <property type="match status" value="1"/>
</dbReference>
<dbReference type="HAMAP" id="MF_00037">
    <property type="entry name" value="MurB"/>
    <property type="match status" value="1"/>
</dbReference>
<dbReference type="InterPro" id="IPR016166">
    <property type="entry name" value="FAD-bd_PCMH"/>
</dbReference>
<dbReference type="InterPro" id="IPR036318">
    <property type="entry name" value="FAD-bd_PCMH-like_sf"/>
</dbReference>
<dbReference type="InterPro" id="IPR016167">
    <property type="entry name" value="FAD-bd_PCMH_sub1"/>
</dbReference>
<dbReference type="InterPro" id="IPR016169">
    <property type="entry name" value="FAD-bd_PCMH_sub2"/>
</dbReference>
<dbReference type="InterPro" id="IPR003170">
    <property type="entry name" value="MurB"/>
</dbReference>
<dbReference type="InterPro" id="IPR011601">
    <property type="entry name" value="MurB_C"/>
</dbReference>
<dbReference type="InterPro" id="IPR036635">
    <property type="entry name" value="MurB_C_sf"/>
</dbReference>
<dbReference type="InterPro" id="IPR006094">
    <property type="entry name" value="Oxid_FAD_bind_N"/>
</dbReference>
<dbReference type="NCBIfam" id="TIGR00179">
    <property type="entry name" value="murB"/>
    <property type="match status" value="1"/>
</dbReference>
<dbReference type="NCBIfam" id="NF010480">
    <property type="entry name" value="PRK13905.1"/>
    <property type="match status" value="1"/>
</dbReference>
<dbReference type="PANTHER" id="PTHR21071">
    <property type="entry name" value="UDP-N-ACETYLENOLPYRUVOYLGLUCOSAMINE REDUCTASE"/>
    <property type="match status" value="1"/>
</dbReference>
<dbReference type="PANTHER" id="PTHR21071:SF4">
    <property type="entry name" value="UDP-N-ACETYLENOLPYRUVOYLGLUCOSAMINE REDUCTASE"/>
    <property type="match status" value="1"/>
</dbReference>
<dbReference type="Pfam" id="PF01565">
    <property type="entry name" value="FAD_binding_4"/>
    <property type="match status" value="1"/>
</dbReference>
<dbReference type="Pfam" id="PF02873">
    <property type="entry name" value="MurB_C"/>
    <property type="match status" value="1"/>
</dbReference>
<dbReference type="SUPFAM" id="SSF56176">
    <property type="entry name" value="FAD-binding/transporter-associated domain-like"/>
    <property type="match status" value="1"/>
</dbReference>
<dbReference type="SUPFAM" id="SSF56194">
    <property type="entry name" value="Uridine diphospho-N-Acetylenolpyruvylglucosamine reductase, MurB, C-terminal domain"/>
    <property type="match status" value="1"/>
</dbReference>
<dbReference type="PROSITE" id="PS51387">
    <property type="entry name" value="FAD_PCMH"/>
    <property type="match status" value="1"/>
</dbReference>
<comment type="function">
    <text evidence="1">Cell wall formation.</text>
</comment>
<comment type="catalytic activity">
    <reaction evidence="1">
        <text>UDP-N-acetyl-alpha-D-muramate + NADP(+) = UDP-N-acetyl-3-O-(1-carboxyvinyl)-alpha-D-glucosamine + NADPH + H(+)</text>
        <dbReference type="Rhea" id="RHEA:12248"/>
        <dbReference type="ChEBI" id="CHEBI:15378"/>
        <dbReference type="ChEBI" id="CHEBI:57783"/>
        <dbReference type="ChEBI" id="CHEBI:58349"/>
        <dbReference type="ChEBI" id="CHEBI:68483"/>
        <dbReference type="ChEBI" id="CHEBI:70757"/>
        <dbReference type="EC" id="1.3.1.98"/>
    </reaction>
</comment>
<comment type="cofactor">
    <cofactor evidence="1">
        <name>FAD</name>
        <dbReference type="ChEBI" id="CHEBI:57692"/>
    </cofactor>
</comment>
<comment type="pathway">
    <text evidence="1">Cell wall biogenesis; peptidoglycan biosynthesis.</text>
</comment>
<comment type="subcellular location">
    <subcellularLocation>
        <location evidence="1">Cytoplasm</location>
    </subcellularLocation>
</comment>
<comment type="similarity">
    <text evidence="1">Belongs to the MurB family.</text>
</comment>
<gene>
    <name evidence="1" type="primary">murB2</name>
    <name type="ordered locus">STH1211</name>
</gene>
<reference key="1">
    <citation type="journal article" date="2004" name="Nucleic Acids Res.">
        <title>Genome sequence of Symbiobacterium thermophilum, an uncultivable bacterium that depends on microbial commensalism.</title>
        <authorList>
            <person name="Ueda K."/>
            <person name="Yamashita A."/>
            <person name="Ishikawa J."/>
            <person name="Shimada M."/>
            <person name="Watsuji T."/>
            <person name="Morimura K."/>
            <person name="Ikeda H."/>
            <person name="Hattori M."/>
            <person name="Beppu T."/>
        </authorList>
    </citation>
    <scope>NUCLEOTIDE SEQUENCE [LARGE SCALE GENOMIC DNA]</scope>
    <source>
        <strain>DSM 24528 / JCM 14929 / IAM 14863 / T</strain>
    </source>
</reference>
<organism>
    <name type="scientific">Symbiobacterium thermophilum (strain DSM 24528 / JCM 14929 / IAM 14863 / T)</name>
    <dbReference type="NCBI Taxonomy" id="292459"/>
    <lineage>
        <taxon>Bacteria</taxon>
        <taxon>Bacillati</taxon>
        <taxon>Bacillota</taxon>
        <taxon>Clostridia</taxon>
        <taxon>Eubacteriales</taxon>
        <taxon>Symbiobacteriaceae</taxon>
        <taxon>Symbiobacterium</taxon>
    </lineage>
</organism>
<keyword id="KW-0131">Cell cycle</keyword>
<keyword id="KW-0132">Cell division</keyword>
<keyword id="KW-0133">Cell shape</keyword>
<keyword id="KW-0961">Cell wall biogenesis/degradation</keyword>
<keyword id="KW-0963">Cytoplasm</keyword>
<keyword id="KW-0274">FAD</keyword>
<keyword id="KW-0285">Flavoprotein</keyword>
<keyword id="KW-0521">NADP</keyword>
<keyword id="KW-0560">Oxidoreductase</keyword>
<keyword id="KW-0573">Peptidoglycan synthesis</keyword>
<keyword id="KW-1185">Reference proteome</keyword>
<accession>Q67Q47</accession>
<name>MURB2_SYMTH</name>
<protein>
    <recommendedName>
        <fullName evidence="1">UDP-N-acetylenolpyruvoylglucosamine reductase 2</fullName>
        <ecNumber evidence="1">1.3.1.98</ecNumber>
    </recommendedName>
    <alternativeName>
        <fullName evidence="1">UDP-N-acetylmuramate dehydrogenase 2</fullName>
    </alternativeName>
</protein>
<proteinExistence type="inferred from homology"/>